<proteinExistence type="inferred from homology"/>
<organism>
    <name type="scientific">Helicobacter pylori (strain Shi470)</name>
    <dbReference type="NCBI Taxonomy" id="512562"/>
    <lineage>
        <taxon>Bacteria</taxon>
        <taxon>Pseudomonadati</taxon>
        <taxon>Campylobacterota</taxon>
        <taxon>Epsilonproteobacteria</taxon>
        <taxon>Campylobacterales</taxon>
        <taxon>Helicobacteraceae</taxon>
        <taxon>Helicobacter</taxon>
    </lineage>
</organism>
<comment type="function">
    <text evidence="1">Specifically methylates the pseudouridine at position 1915 (m3Psi1915) in 23S rRNA.</text>
</comment>
<comment type="catalytic activity">
    <reaction evidence="1">
        <text>pseudouridine(1915) in 23S rRNA + S-adenosyl-L-methionine = N(3)-methylpseudouridine(1915) in 23S rRNA + S-adenosyl-L-homocysteine + H(+)</text>
        <dbReference type="Rhea" id="RHEA:42752"/>
        <dbReference type="Rhea" id="RHEA-COMP:10221"/>
        <dbReference type="Rhea" id="RHEA-COMP:10222"/>
        <dbReference type="ChEBI" id="CHEBI:15378"/>
        <dbReference type="ChEBI" id="CHEBI:57856"/>
        <dbReference type="ChEBI" id="CHEBI:59789"/>
        <dbReference type="ChEBI" id="CHEBI:65314"/>
        <dbReference type="ChEBI" id="CHEBI:74486"/>
        <dbReference type="EC" id="2.1.1.177"/>
    </reaction>
</comment>
<comment type="subunit">
    <text evidence="1">Homodimer.</text>
</comment>
<comment type="subcellular location">
    <subcellularLocation>
        <location evidence="1">Cytoplasm</location>
    </subcellularLocation>
</comment>
<comment type="similarity">
    <text evidence="1">Belongs to the RNA methyltransferase RlmH family.</text>
</comment>
<feature type="chain" id="PRO_0000366609" description="Ribosomal RNA large subunit methyltransferase H">
    <location>
        <begin position="1"/>
        <end position="150"/>
    </location>
</feature>
<feature type="binding site" evidence="1">
    <location>
        <position position="100"/>
    </location>
    <ligand>
        <name>S-adenosyl-L-methionine</name>
        <dbReference type="ChEBI" id="CHEBI:59789"/>
    </ligand>
</feature>
<feature type="binding site" evidence="1">
    <location>
        <begin position="118"/>
        <end position="123"/>
    </location>
    <ligand>
        <name>S-adenosyl-L-methionine</name>
        <dbReference type="ChEBI" id="CHEBI:59789"/>
    </ligand>
</feature>
<protein>
    <recommendedName>
        <fullName evidence="1">Ribosomal RNA large subunit methyltransferase H</fullName>
        <ecNumber evidence="1">2.1.1.177</ecNumber>
    </recommendedName>
    <alternativeName>
        <fullName evidence="1">23S rRNA (pseudouridine1915-N3)-methyltransferase</fullName>
    </alternativeName>
    <alternativeName>
        <fullName evidence="1">23S rRNA m3Psi1915 methyltransferase</fullName>
    </alternativeName>
    <alternativeName>
        <fullName evidence="1">rRNA (pseudouridine-N3-)-methyltransferase RlmH</fullName>
    </alternativeName>
</protein>
<gene>
    <name evidence="1" type="primary">rlmH</name>
    <name type="ordered locus">HPSH_05000</name>
</gene>
<keyword id="KW-0963">Cytoplasm</keyword>
<keyword id="KW-0489">Methyltransferase</keyword>
<keyword id="KW-0698">rRNA processing</keyword>
<keyword id="KW-0949">S-adenosyl-L-methionine</keyword>
<keyword id="KW-0808">Transferase</keyword>
<evidence type="ECO:0000255" key="1">
    <source>
        <dbReference type="HAMAP-Rule" id="MF_00658"/>
    </source>
</evidence>
<reference key="1">
    <citation type="submission" date="2008-05" db="EMBL/GenBank/DDBJ databases">
        <title>Genome sequence of Helicobacter pylori from the remote Amazon: traces of Asian ancestry of the first Americans.</title>
        <authorList>
            <person name="Kersulyte D."/>
            <person name="Kalia A."/>
            <person name="Gilman R.H."/>
            <person name="Berg D.E."/>
        </authorList>
    </citation>
    <scope>NUCLEOTIDE SEQUENCE [LARGE SCALE GENOMIC DNA]</scope>
    <source>
        <strain>Shi470</strain>
    </source>
</reference>
<dbReference type="EC" id="2.1.1.177" evidence="1"/>
<dbReference type="EMBL" id="CP001072">
    <property type="protein sequence ID" value="ACD48428.1"/>
    <property type="molecule type" value="Genomic_DNA"/>
</dbReference>
<dbReference type="RefSeq" id="WP_001203873.1">
    <property type="nucleotide sequence ID" value="NC_010698.2"/>
</dbReference>
<dbReference type="SMR" id="B2UU96"/>
<dbReference type="GeneID" id="93237320"/>
<dbReference type="KEGG" id="hps:HPSH_05000"/>
<dbReference type="HOGENOM" id="CLU_100552_2_1_7"/>
<dbReference type="GO" id="GO:0005737">
    <property type="term" value="C:cytoplasm"/>
    <property type="evidence" value="ECO:0007669"/>
    <property type="project" value="UniProtKB-SubCell"/>
</dbReference>
<dbReference type="GO" id="GO:0070038">
    <property type="term" value="F:rRNA (pseudouridine-N3-)-methyltransferase activity"/>
    <property type="evidence" value="ECO:0007669"/>
    <property type="project" value="UniProtKB-UniRule"/>
</dbReference>
<dbReference type="CDD" id="cd18081">
    <property type="entry name" value="RlmH-like"/>
    <property type="match status" value="1"/>
</dbReference>
<dbReference type="Gene3D" id="3.40.1280.10">
    <property type="match status" value="1"/>
</dbReference>
<dbReference type="HAMAP" id="MF_00658">
    <property type="entry name" value="23SrRNA_methyltr_H"/>
    <property type="match status" value="1"/>
</dbReference>
<dbReference type="InterPro" id="IPR029028">
    <property type="entry name" value="Alpha/beta_knot_MTases"/>
</dbReference>
<dbReference type="InterPro" id="IPR003742">
    <property type="entry name" value="RlmH-like"/>
</dbReference>
<dbReference type="InterPro" id="IPR029026">
    <property type="entry name" value="tRNA_m1G_MTases_N"/>
</dbReference>
<dbReference type="NCBIfam" id="NF000987">
    <property type="entry name" value="PRK00103.2-1"/>
    <property type="match status" value="1"/>
</dbReference>
<dbReference type="PANTHER" id="PTHR33603">
    <property type="entry name" value="METHYLTRANSFERASE"/>
    <property type="match status" value="1"/>
</dbReference>
<dbReference type="PANTHER" id="PTHR33603:SF1">
    <property type="entry name" value="RIBOSOMAL RNA LARGE SUBUNIT METHYLTRANSFERASE H"/>
    <property type="match status" value="1"/>
</dbReference>
<dbReference type="Pfam" id="PF02590">
    <property type="entry name" value="SPOUT_MTase"/>
    <property type="match status" value="1"/>
</dbReference>
<dbReference type="PIRSF" id="PIRSF004505">
    <property type="entry name" value="MT_bac"/>
    <property type="match status" value="1"/>
</dbReference>
<dbReference type="SUPFAM" id="SSF75217">
    <property type="entry name" value="alpha/beta knot"/>
    <property type="match status" value="1"/>
</dbReference>
<sequence>MRCVVYSIAKSSPLELVKIYQKQCKQFDCELELVDLFPKNTANAQKVSKELAQKSYSLAFEPYLNPKAKNIALHPKAQRGDSFAFSKMLENHLNINFFIAGAYGFEENFLKDCQAWSLSEMTFSHEVAKIVLCEQIYRALSIIFKHPYHK</sequence>
<accession>B2UU96</accession>
<name>RLMH_HELPS</name>